<feature type="signal peptide" evidence="1">
    <location>
        <begin position="1"/>
        <end position="20"/>
    </location>
</feature>
<feature type="chain" id="PRO_1000068524" description="Outer membrane protein assembly factor BamA">
    <location>
        <begin position="21"/>
        <end position="810"/>
    </location>
</feature>
<feature type="domain" description="POTRA 1" evidence="2">
    <location>
        <begin position="24"/>
        <end position="91"/>
    </location>
</feature>
<feature type="domain" description="POTRA 2" evidence="2">
    <location>
        <begin position="92"/>
        <end position="172"/>
    </location>
</feature>
<feature type="domain" description="POTRA 3" evidence="2">
    <location>
        <begin position="175"/>
        <end position="263"/>
    </location>
</feature>
<feature type="domain" description="POTRA 4" evidence="2">
    <location>
        <begin position="266"/>
        <end position="344"/>
    </location>
</feature>
<feature type="domain" description="POTRA 5" evidence="2">
    <location>
        <begin position="347"/>
        <end position="421"/>
    </location>
</feature>
<proteinExistence type="inferred from homology"/>
<reference key="1">
    <citation type="journal article" date="2008" name="J. Bacteriol.">
        <title>The pangenome structure of Escherichia coli: comparative genomic analysis of E. coli commensal and pathogenic isolates.</title>
        <authorList>
            <person name="Rasko D.A."/>
            <person name="Rosovitz M.J."/>
            <person name="Myers G.S.A."/>
            <person name="Mongodin E.F."/>
            <person name="Fricke W.F."/>
            <person name="Gajer P."/>
            <person name="Crabtree J."/>
            <person name="Sebaihia M."/>
            <person name="Thomson N.R."/>
            <person name="Chaudhuri R."/>
            <person name="Henderson I.R."/>
            <person name="Sperandio V."/>
            <person name="Ravel J."/>
        </authorList>
    </citation>
    <scope>NUCLEOTIDE SEQUENCE [LARGE SCALE GENOMIC DNA]</scope>
    <source>
        <strain>HS</strain>
    </source>
</reference>
<gene>
    <name evidence="1" type="primary">bamA</name>
    <name type="synonym">yaeT</name>
    <name type="ordered locus">EcHS_A0179</name>
</gene>
<sequence>MAMKKLLIASLLFSSATVYGAEGFVVKDIHFEGLQRVAVGAALLSMPVRTGDTVNDEDISNTIRALFATGNFEDVRVLRDGDTLLVQVKERPTIASITFSGNKSVKDDMLKQNLEASGVRVGESLDRTTIADIEKGLEDFYYSVGKYSASVKAVVTPLPRNRVDLKLVFQEGVSAEIQQINIVGNHAFTTDELISHFQLRDEVPWWNVVGDRKYQKQKLAGDLETLRSYYLDRGYARFNIDSTQVSLTPDKKGIYVTVNITEGDQYKLSGVEVSGNLAGHSAEIEQLTKIEPGELYNGTKVTKMEDDIKKLLGRYGYAYPRVQSMPEINDADKTVKLRVNVDAGNRFYVRKIRFEGNDTSKDAVLRREMRQMEGAWLGSDLVDQGKERLNRLGFFETVDTDTQRVPGSPDQVDVVYKVKERNTGSFNFGIGYGTESGVSFQAGVQQDNWLGTGYAVGINGTKNDYQTYAELSVTNPYFTVDGVSLGGRLFYNDFQADDADLSDYTNKSYGTDVTLGFPINEYNSLRAGLGYVHNSLSNMQPQVAMWRYLYSMGEHPSTSDQDNSFKTDDFTFNYGWTYNKLDRGYFPTDGSRVNLTGKVTIPGSDNEYYKVTLDTATYVPIDDDHKWVVLGRTRWGYGDGLGGKEMPFYENFYAGGSSTVRGFQSNTIGPKAVYFPHQASNYDPDYDYECATQDGAKDLCKSDDAVGGNAMAVASLEFITPTPFISDKYANSVRTSFFWDMGTVWDTNWDSSQYSGYPDYSDPSNIRMSAGIALQWMSPLGPLVFSYAQPFKKYDGDKAEQFQFNIGKTW</sequence>
<accession>A7ZWC3</accession>
<organism>
    <name type="scientific">Escherichia coli O9:H4 (strain HS)</name>
    <dbReference type="NCBI Taxonomy" id="331112"/>
    <lineage>
        <taxon>Bacteria</taxon>
        <taxon>Pseudomonadati</taxon>
        <taxon>Pseudomonadota</taxon>
        <taxon>Gammaproteobacteria</taxon>
        <taxon>Enterobacterales</taxon>
        <taxon>Enterobacteriaceae</taxon>
        <taxon>Escherichia</taxon>
    </lineage>
</organism>
<comment type="function">
    <text evidence="1">Part of the outer membrane protein assembly complex, which is involved in assembly and insertion of beta-barrel proteins into the outer membrane. Constitutes, with BamD, the core component of the assembly machinery.</text>
</comment>
<comment type="subunit">
    <text evidence="1">Part of the Bam complex, which is composed of the outer membrane protein BamA, and four lipoproteins BamB, BamC, BamD and BamE.</text>
</comment>
<comment type="subcellular location">
    <subcellularLocation>
        <location evidence="1">Cell outer membrane</location>
    </subcellularLocation>
</comment>
<comment type="similarity">
    <text evidence="1">Belongs to the BamA family.</text>
</comment>
<protein>
    <recommendedName>
        <fullName evidence="1">Outer membrane protein assembly factor BamA</fullName>
    </recommendedName>
</protein>
<dbReference type="EMBL" id="CP000802">
    <property type="protein sequence ID" value="ABV04577.1"/>
    <property type="molecule type" value="Genomic_DNA"/>
</dbReference>
<dbReference type="RefSeq" id="WP_001240896.1">
    <property type="nucleotide sequence ID" value="NC_009800.1"/>
</dbReference>
<dbReference type="BMRB" id="A7ZWC3"/>
<dbReference type="SMR" id="A7ZWC3"/>
<dbReference type="GeneID" id="93777248"/>
<dbReference type="KEGG" id="ecx:EcHS_A0179"/>
<dbReference type="HOGENOM" id="CLU_007664_1_0_6"/>
<dbReference type="GO" id="GO:1990063">
    <property type="term" value="C:Bam protein complex"/>
    <property type="evidence" value="ECO:0007669"/>
    <property type="project" value="TreeGrafter"/>
</dbReference>
<dbReference type="GO" id="GO:0043165">
    <property type="term" value="P:Gram-negative-bacterium-type cell outer membrane assembly"/>
    <property type="evidence" value="ECO:0007669"/>
    <property type="project" value="UniProtKB-UniRule"/>
</dbReference>
<dbReference type="GO" id="GO:0051205">
    <property type="term" value="P:protein insertion into membrane"/>
    <property type="evidence" value="ECO:0007669"/>
    <property type="project" value="UniProtKB-UniRule"/>
</dbReference>
<dbReference type="FunFam" id="2.40.160.50:FF:000001">
    <property type="entry name" value="Outer membrane protein assembly factor BamA"/>
    <property type="match status" value="1"/>
</dbReference>
<dbReference type="FunFam" id="3.10.20.310:FF:000001">
    <property type="entry name" value="Outer membrane protein assembly factor BamA"/>
    <property type="match status" value="1"/>
</dbReference>
<dbReference type="FunFam" id="3.10.20.310:FF:000002">
    <property type="entry name" value="Outer membrane protein assembly factor BamA"/>
    <property type="match status" value="1"/>
</dbReference>
<dbReference type="FunFam" id="3.10.20.310:FF:000003">
    <property type="entry name" value="Outer membrane protein assembly factor BamA"/>
    <property type="match status" value="1"/>
</dbReference>
<dbReference type="FunFam" id="3.10.20.310:FF:000004">
    <property type="entry name" value="Outer membrane protein assembly factor BamA"/>
    <property type="match status" value="1"/>
</dbReference>
<dbReference type="FunFam" id="3.10.20.310:FF:000005">
    <property type="entry name" value="Outer membrane protein assembly factor BamA"/>
    <property type="match status" value="1"/>
</dbReference>
<dbReference type="Gene3D" id="3.10.20.310">
    <property type="entry name" value="membrane protein fhac"/>
    <property type="match status" value="5"/>
</dbReference>
<dbReference type="Gene3D" id="2.40.160.50">
    <property type="entry name" value="membrane protein fhac: a member of the omp85/tpsb transporter family"/>
    <property type="match status" value="1"/>
</dbReference>
<dbReference type="HAMAP" id="MF_01430">
    <property type="entry name" value="OM_assembly_BamA"/>
    <property type="match status" value="1"/>
</dbReference>
<dbReference type="InterPro" id="IPR000184">
    <property type="entry name" value="Bac_surfAg_D15"/>
</dbReference>
<dbReference type="InterPro" id="IPR010827">
    <property type="entry name" value="BamA/TamA_POTRA"/>
</dbReference>
<dbReference type="InterPro" id="IPR039910">
    <property type="entry name" value="D15-like"/>
</dbReference>
<dbReference type="InterPro" id="IPR023707">
    <property type="entry name" value="OM_assembly_BamA"/>
</dbReference>
<dbReference type="InterPro" id="IPR034746">
    <property type="entry name" value="POTRA"/>
</dbReference>
<dbReference type="NCBIfam" id="TIGR03303">
    <property type="entry name" value="OM_YaeT"/>
    <property type="match status" value="1"/>
</dbReference>
<dbReference type="NCBIfam" id="NF008287">
    <property type="entry name" value="PRK11067.1"/>
    <property type="match status" value="1"/>
</dbReference>
<dbReference type="PANTHER" id="PTHR12815:SF23">
    <property type="entry name" value="OUTER MEMBRANE PROTEIN ASSEMBLY FACTOR BAMA"/>
    <property type="match status" value="1"/>
</dbReference>
<dbReference type="PANTHER" id="PTHR12815">
    <property type="entry name" value="SORTING AND ASSEMBLY MACHINERY SAMM50 PROTEIN FAMILY MEMBER"/>
    <property type="match status" value="1"/>
</dbReference>
<dbReference type="Pfam" id="PF01103">
    <property type="entry name" value="Omp85"/>
    <property type="match status" value="1"/>
</dbReference>
<dbReference type="Pfam" id="PF07244">
    <property type="entry name" value="POTRA"/>
    <property type="match status" value="4"/>
</dbReference>
<dbReference type="PIRSF" id="PIRSF006076">
    <property type="entry name" value="OM_assembly_OMP85"/>
    <property type="match status" value="1"/>
</dbReference>
<dbReference type="PROSITE" id="PS51779">
    <property type="entry name" value="POTRA"/>
    <property type="match status" value="5"/>
</dbReference>
<keyword id="KW-0998">Cell outer membrane</keyword>
<keyword id="KW-0472">Membrane</keyword>
<keyword id="KW-0677">Repeat</keyword>
<keyword id="KW-0732">Signal</keyword>
<keyword id="KW-0812">Transmembrane</keyword>
<keyword id="KW-1134">Transmembrane beta strand</keyword>
<name>BAMA_ECOHS</name>
<evidence type="ECO:0000255" key="1">
    <source>
        <dbReference type="HAMAP-Rule" id="MF_01430"/>
    </source>
</evidence>
<evidence type="ECO:0000255" key="2">
    <source>
        <dbReference type="PROSITE-ProRule" id="PRU01115"/>
    </source>
</evidence>